<evidence type="ECO:0000255" key="1">
    <source>
        <dbReference type="PROSITE-ProRule" id="PRU00042"/>
    </source>
</evidence>
<evidence type="ECO:0000305" key="2"/>
<protein>
    <recommendedName>
        <fullName>Gastrula zinc finger protein XlCGF44.2</fullName>
    </recommendedName>
</protein>
<name>ZG44_XENLA</name>
<keyword id="KW-0238">DNA-binding</keyword>
<keyword id="KW-0479">Metal-binding</keyword>
<keyword id="KW-0539">Nucleus</keyword>
<keyword id="KW-1185">Reference proteome</keyword>
<keyword id="KW-0677">Repeat</keyword>
<keyword id="KW-0804">Transcription</keyword>
<keyword id="KW-0805">Transcription regulation</keyword>
<keyword id="KW-0862">Zinc</keyword>
<keyword id="KW-0863">Zinc-finger</keyword>
<accession>P18721</accession>
<dbReference type="PIR" id="S06571">
    <property type="entry name" value="S06571"/>
</dbReference>
<dbReference type="SMR" id="P18721"/>
<dbReference type="Proteomes" id="UP000186698">
    <property type="component" value="Unplaced"/>
</dbReference>
<dbReference type="GO" id="GO:0005654">
    <property type="term" value="C:nucleoplasm"/>
    <property type="evidence" value="ECO:0000318"/>
    <property type="project" value="GO_Central"/>
</dbReference>
<dbReference type="GO" id="GO:0001227">
    <property type="term" value="F:DNA-binding transcription repressor activity, RNA polymerase II-specific"/>
    <property type="evidence" value="ECO:0000318"/>
    <property type="project" value="GO_Central"/>
</dbReference>
<dbReference type="GO" id="GO:0000978">
    <property type="term" value="F:RNA polymerase II cis-regulatory region sequence-specific DNA binding"/>
    <property type="evidence" value="ECO:0000318"/>
    <property type="project" value="GO_Central"/>
</dbReference>
<dbReference type="GO" id="GO:0008270">
    <property type="term" value="F:zinc ion binding"/>
    <property type="evidence" value="ECO:0007669"/>
    <property type="project" value="UniProtKB-KW"/>
</dbReference>
<dbReference type="GO" id="GO:0006357">
    <property type="term" value="P:regulation of transcription by RNA polymerase II"/>
    <property type="evidence" value="ECO:0000318"/>
    <property type="project" value="GO_Central"/>
</dbReference>
<dbReference type="FunFam" id="3.30.160.60:FF:000322">
    <property type="entry name" value="GDNF-inducible zinc finger protein 1"/>
    <property type="match status" value="1"/>
</dbReference>
<dbReference type="FunFam" id="3.30.160.60:FF:000097">
    <property type="entry name" value="Zinc finger protein"/>
    <property type="match status" value="1"/>
</dbReference>
<dbReference type="FunFam" id="3.30.160.60:FF:000706">
    <property type="entry name" value="Zinc finger protein"/>
    <property type="match status" value="1"/>
</dbReference>
<dbReference type="FunFam" id="3.30.160.60:FF:001370">
    <property type="entry name" value="Zinc finger protein"/>
    <property type="match status" value="1"/>
</dbReference>
<dbReference type="FunFam" id="3.30.160.60:FF:000478">
    <property type="entry name" value="Zinc finger protein 133"/>
    <property type="match status" value="1"/>
</dbReference>
<dbReference type="Gene3D" id="3.30.160.60">
    <property type="entry name" value="Classic Zinc Finger"/>
    <property type="match status" value="5"/>
</dbReference>
<dbReference type="InterPro" id="IPR050717">
    <property type="entry name" value="C2H2-ZF_Transcription_Reg"/>
</dbReference>
<dbReference type="InterPro" id="IPR036236">
    <property type="entry name" value="Znf_C2H2_sf"/>
</dbReference>
<dbReference type="InterPro" id="IPR013087">
    <property type="entry name" value="Znf_C2H2_type"/>
</dbReference>
<dbReference type="PANTHER" id="PTHR14196">
    <property type="entry name" value="ODD-SKIPPED - RELATED"/>
    <property type="match status" value="1"/>
</dbReference>
<dbReference type="PANTHER" id="PTHR14196:SF12">
    <property type="entry name" value="ZINC FINGER PROTEIN 208-LIKE"/>
    <property type="match status" value="1"/>
</dbReference>
<dbReference type="Pfam" id="PF00096">
    <property type="entry name" value="zf-C2H2"/>
    <property type="match status" value="4"/>
</dbReference>
<dbReference type="SMART" id="SM00355">
    <property type="entry name" value="ZnF_C2H2"/>
    <property type="match status" value="5"/>
</dbReference>
<dbReference type="SUPFAM" id="SSF57667">
    <property type="entry name" value="beta-beta-alpha zinc fingers"/>
    <property type="match status" value="3"/>
</dbReference>
<dbReference type="PROSITE" id="PS00028">
    <property type="entry name" value="ZINC_FINGER_C2H2_1"/>
    <property type="match status" value="5"/>
</dbReference>
<dbReference type="PROSITE" id="PS50157">
    <property type="entry name" value="ZINC_FINGER_C2H2_2"/>
    <property type="match status" value="5"/>
</dbReference>
<comment type="function">
    <text>May be involved in transcriptional regulation.</text>
</comment>
<comment type="subcellular location">
    <subcellularLocation>
        <location evidence="2">Nucleus</location>
    </subcellularLocation>
</comment>
<comment type="similarity">
    <text evidence="2">Belongs to the krueppel C2H2-type zinc-finger protein family.</text>
</comment>
<feature type="chain" id="PRO_0000047794" description="Gastrula zinc finger protein XlCGF44.2">
    <location>
        <begin position="1" status="less than"/>
        <end position="138" status="greater than"/>
    </location>
</feature>
<feature type="zinc finger region" description="C2H2-type 1" evidence="1">
    <location>
        <begin position="5"/>
        <end position="27"/>
    </location>
</feature>
<feature type="zinc finger region" description="C2H2-type 2" evidence="1">
    <location>
        <begin position="32"/>
        <end position="54"/>
    </location>
</feature>
<feature type="zinc finger region" description="C2H2-type 3" evidence="1">
    <location>
        <begin position="60"/>
        <end position="82"/>
    </location>
</feature>
<feature type="zinc finger region" description="C2H2-type 4" evidence="1">
    <location>
        <begin position="88"/>
        <end position="110"/>
    </location>
</feature>
<feature type="zinc finger region" description="C2H2-type 5" evidence="1">
    <location>
        <begin position="116"/>
        <end position="138"/>
    </location>
</feature>
<feature type="non-terminal residue">
    <location>
        <position position="1"/>
    </location>
</feature>
<feature type="non-terminal residue">
    <location>
        <position position="138"/>
    </location>
</feature>
<sequence>TIKPFACTKCKRRFCSNKELFSHKRIHTGRPFVCAVCGKYFSDRIILQAHQRLHTGEKPFTCTQCHKSFLYKRNLHQHQQIHQKHKPYVCSTCGKQLKSKLTLNQHMKTHSNIKPFACSECSKSFRFKAHLHRHQESH</sequence>
<proteinExistence type="inferred from homology"/>
<organism>
    <name type="scientific">Xenopus laevis</name>
    <name type="common">African clawed frog</name>
    <dbReference type="NCBI Taxonomy" id="8355"/>
    <lineage>
        <taxon>Eukaryota</taxon>
        <taxon>Metazoa</taxon>
        <taxon>Chordata</taxon>
        <taxon>Craniata</taxon>
        <taxon>Vertebrata</taxon>
        <taxon>Euteleostomi</taxon>
        <taxon>Amphibia</taxon>
        <taxon>Batrachia</taxon>
        <taxon>Anura</taxon>
        <taxon>Pipoidea</taxon>
        <taxon>Pipidae</taxon>
        <taxon>Xenopodinae</taxon>
        <taxon>Xenopus</taxon>
        <taxon>Xenopus</taxon>
    </lineage>
</organism>
<reference key="1">
    <citation type="journal article" date="1989" name="J. Mol. Biol.">
        <title>Second-order repeats in Xenopus laevis finger proteins.</title>
        <authorList>
            <person name="Nietfeld W."/>
            <person name="El-Baradi T."/>
            <person name="Mentzel H."/>
            <person name="Pieler T."/>
            <person name="Koester M."/>
            <person name="Poeting A."/>
            <person name="Knoechel W."/>
        </authorList>
    </citation>
    <scope>NUCLEOTIDE SEQUENCE</scope>
</reference>